<keyword id="KW-0963">Cytoplasm</keyword>
<keyword id="KW-0396">Initiation factor</keyword>
<keyword id="KW-0648">Protein biosynthesis</keyword>
<keyword id="KW-0694">RNA-binding</keyword>
<keyword id="KW-0699">rRNA-binding</keyword>
<proteinExistence type="inferred from homology"/>
<evidence type="ECO:0000255" key="1">
    <source>
        <dbReference type="HAMAP-Rule" id="MF_00075"/>
    </source>
</evidence>
<feature type="chain" id="PRO_0000263896" description="Translation initiation factor IF-1">
    <location>
        <begin position="1"/>
        <end position="74"/>
    </location>
</feature>
<feature type="domain" description="S1-like" evidence="1">
    <location>
        <begin position="1"/>
        <end position="72"/>
    </location>
</feature>
<protein>
    <recommendedName>
        <fullName evidence="1">Translation initiation factor IF-1</fullName>
    </recommendedName>
</protein>
<accession>Q110C7</accession>
<organism>
    <name type="scientific">Trichodesmium erythraeum (strain IMS101)</name>
    <dbReference type="NCBI Taxonomy" id="203124"/>
    <lineage>
        <taxon>Bacteria</taxon>
        <taxon>Bacillati</taxon>
        <taxon>Cyanobacteriota</taxon>
        <taxon>Cyanophyceae</taxon>
        <taxon>Oscillatoriophycideae</taxon>
        <taxon>Oscillatoriales</taxon>
        <taxon>Microcoleaceae</taxon>
        <taxon>Trichodesmium</taxon>
    </lineage>
</organism>
<reference key="1">
    <citation type="journal article" date="2015" name="Proc. Natl. Acad. Sci. U.S.A.">
        <title>Trichodesmium genome maintains abundant, widespread noncoding DNA in situ, despite oligotrophic lifestyle.</title>
        <authorList>
            <person name="Walworth N."/>
            <person name="Pfreundt U."/>
            <person name="Nelson W.C."/>
            <person name="Mincer T."/>
            <person name="Heidelberg J.F."/>
            <person name="Fu F."/>
            <person name="Waterbury J.B."/>
            <person name="Glavina del Rio T."/>
            <person name="Goodwin L."/>
            <person name="Kyrpides N.C."/>
            <person name="Land M.L."/>
            <person name="Woyke T."/>
            <person name="Hutchins D.A."/>
            <person name="Hess W.R."/>
            <person name="Webb E.A."/>
        </authorList>
    </citation>
    <scope>NUCLEOTIDE SEQUENCE [LARGE SCALE GENOMIC DNA]</scope>
    <source>
        <strain>IMS101</strain>
    </source>
</reference>
<name>IF1_TRIEI</name>
<sequence length="74" mass="8565">MSKQDLIEMEGTVTESLPNAMFRVDLDNGFNVLAHISGKIRRNYIKILPGDRVKVELTPYDLTKGRITYRLRKK</sequence>
<dbReference type="EMBL" id="CP000393">
    <property type="protein sequence ID" value="ABG52147.1"/>
    <property type="molecule type" value="Genomic_DNA"/>
</dbReference>
<dbReference type="RefSeq" id="WP_006276978.1">
    <property type="nucleotide sequence ID" value="NC_008312.1"/>
</dbReference>
<dbReference type="SMR" id="Q110C7"/>
<dbReference type="STRING" id="203124.Tery_2992"/>
<dbReference type="GeneID" id="92781360"/>
<dbReference type="KEGG" id="ter:Tery_2992"/>
<dbReference type="eggNOG" id="COG0361">
    <property type="taxonomic scope" value="Bacteria"/>
</dbReference>
<dbReference type="HOGENOM" id="CLU_151267_1_0_3"/>
<dbReference type="OrthoDB" id="9803250at2"/>
<dbReference type="GO" id="GO:0005829">
    <property type="term" value="C:cytosol"/>
    <property type="evidence" value="ECO:0007669"/>
    <property type="project" value="TreeGrafter"/>
</dbReference>
<dbReference type="GO" id="GO:0043022">
    <property type="term" value="F:ribosome binding"/>
    <property type="evidence" value="ECO:0007669"/>
    <property type="project" value="UniProtKB-UniRule"/>
</dbReference>
<dbReference type="GO" id="GO:0019843">
    <property type="term" value="F:rRNA binding"/>
    <property type="evidence" value="ECO:0007669"/>
    <property type="project" value="UniProtKB-UniRule"/>
</dbReference>
<dbReference type="GO" id="GO:0003743">
    <property type="term" value="F:translation initiation factor activity"/>
    <property type="evidence" value="ECO:0007669"/>
    <property type="project" value="UniProtKB-UniRule"/>
</dbReference>
<dbReference type="CDD" id="cd04451">
    <property type="entry name" value="S1_IF1"/>
    <property type="match status" value="1"/>
</dbReference>
<dbReference type="FunFam" id="2.40.50.140:FF:000002">
    <property type="entry name" value="Translation initiation factor IF-1"/>
    <property type="match status" value="1"/>
</dbReference>
<dbReference type="Gene3D" id="2.40.50.140">
    <property type="entry name" value="Nucleic acid-binding proteins"/>
    <property type="match status" value="1"/>
</dbReference>
<dbReference type="HAMAP" id="MF_00075">
    <property type="entry name" value="IF_1"/>
    <property type="match status" value="1"/>
</dbReference>
<dbReference type="InterPro" id="IPR012340">
    <property type="entry name" value="NA-bd_OB-fold"/>
</dbReference>
<dbReference type="InterPro" id="IPR006196">
    <property type="entry name" value="RNA-binding_domain_S1_IF1"/>
</dbReference>
<dbReference type="InterPro" id="IPR003029">
    <property type="entry name" value="S1_domain"/>
</dbReference>
<dbReference type="InterPro" id="IPR004368">
    <property type="entry name" value="TIF_IF1"/>
</dbReference>
<dbReference type="NCBIfam" id="TIGR00008">
    <property type="entry name" value="infA"/>
    <property type="match status" value="1"/>
</dbReference>
<dbReference type="PANTHER" id="PTHR33370">
    <property type="entry name" value="TRANSLATION INITIATION FACTOR IF-1, CHLOROPLASTIC"/>
    <property type="match status" value="1"/>
</dbReference>
<dbReference type="PANTHER" id="PTHR33370:SF1">
    <property type="entry name" value="TRANSLATION INITIATION FACTOR IF-1, CHLOROPLASTIC"/>
    <property type="match status" value="1"/>
</dbReference>
<dbReference type="Pfam" id="PF01176">
    <property type="entry name" value="eIF-1a"/>
    <property type="match status" value="1"/>
</dbReference>
<dbReference type="SMART" id="SM00316">
    <property type="entry name" value="S1"/>
    <property type="match status" value="1"/>
</dbReference>
<dbReference type="SUPFAM" id="SSF50249">
    <property type="entry name" value="Nucleic acid-binding proteins"/>
    <property type="match status" value="1"/>
</dbReference>
<dbReference type="PROSITE" id="PS50832">
    <property type="entry name" value="S1_IF1_TYPE"/>
    <property type="match status" value="1"/>
</dbReference>
<comment type="function">
    <text evidence="1">One of the essential components for the initiation of protein synthesis. Stabilizes the binding of IF-2 and IF-3 on the 30S subunit to which N-formylmethionyl-tRNA(fMet) subsequently binds. Helps modulate mRNA selection, yielding the 30S pre-initiation complex (PIC). Upon addition of the 50S ribosomal subunit IF-1, IF-2 and IF-3 are released leaving the mature 70S translation initiation complex.</text>
</comment>
<comment type="subunit">
    <text evidence="1">Component of the 30S ribosomal translation pre-initiation complex which assembles on the 30S ribosome in the order IF-2 and IF-3, IF-1 and N-formylmethionyl-tRNA(fMet); mRNA recruitment can occur at any time during PIC assembly.</text>
</comment>
<comment type="subcellular location">
    <subcellularLocation>
        <location evidence="1">Cytoplasm</location>
    </subcellularLocation>
</comment>
<comment type="similarity">
    <text evidence="1">Belongs to the IF-1 family.</text>
</comment>
<gene>
    <name evidence="1" type="primary">infA</name>
    <name type="ordered locus">Tery_2992</name>
</gene>